<comment type="function">
    <text evidence="1">Catalyzes the reversible phosphorylation of UMP to UDP.</text>
</comment>
<comment type="catalytic activity">
    <reaction evidence="1">
        <text>UMP + ATP = UDP + ADP</text>
        <dbReference type="Rhea" id="RHEA:24400"/>
        <dbReference type="ChEBI" id="CHEBI:30616"/>
        <dbReference type="ChEBI" id="CHEBI:57865"/>
        <dbReference type="ChEBI" id="CHEBI:58223"/>
        <dbReference type="ChEBI" id="CHEBI:456216"/>
        <dbReference type="EC" id="2.7.4.22"/>
    </reaction>
</comment>
<comment type="activity regulation">
    <text evidence="1">Allosterically activated by GTP. Inhibited by UTP.</text>
</comment>
<comment type="pathway">
    <text evidence="1">Pyrimidine metabolism; CTP biosynthesis via de novo pathway; UDP from UMP (UMPK route): step 1/1.</text>
</comment>
<comment type="subunit">
    <text evidence="1">Homohexamer.</text>
</comment>
<comment type="subcellular location">
    <subcellularLocation>
        <location evidence="1">Cytoplasm</location>
    </subcellularLocation>
</comment>
<comment type="similarity">
    <text evidence="1">Belongs to the UMP kinase family.</text>
</comment>
<gene>
    <name evidence="1" type="primary">pyrH</name>
    <name type="ordered locus">Patl_1251</name>
</gene>
<sequence length="247" mass="26632">MSTTPKHAYRRILLKLSGEALMGEEGFGIDPKVLERMAQEIKELVELGIEVGLVIGGGNLFRGEGLAKAGMNRVVGDHMGMLATVMNGLAMRDALHRAFVNARLMSAIPLNGVCDAYNWAEAISLLKSGRVVIFAAGTGNPFFTTDSAACLRGIEIEADAVLKGTKVDGVYDSDPAKNPDAVLYKKLSYSEVLDKELKVMDLAAFTLARDHNIPIRVFNMNTPGCLRAVVLGEDVGTVICHPEKQDN</sequence>
<proteinExistence type="inferred from homology"/>
<evidence type="ECO:0000255" key="1">
    <source>
        <dbReference type="HAMAP-Rule" id="MF_01220"/>
    </source>
</evidence>
<protein>
    <recommendedName>
        <fullName evidence="1">Uridylate kinase</fullName>
        <shortName evidence="1">UK</shortName>
        <ecNumber evidence="1">2.7.4.22</ecNumber>
    </recommendedName>
    <alternativeName>
        <fullName evidence="1">Uridine monophosphate kinase</fullName>
        <shortName evidence="1">UMP kinase</shortName>
        <shortName evidence="1">UMPK</shortName>
    </alternativeName>
</protein>
<dbReference type="EC" id="2.7.4.22" evidence="1"/>
<dbReference type="EMBL" id="CP000388">
    <property type="protein sequence ID" value="ABG39777.1"/>
    <property type="molecule type" value="Genomic_DNA"/>
</dbReference>
<dbReference type="RefSeq" id="WP_011574104.1">
    <property type="nucleotide sequence ID" value="NC_008228.1"/>
</dbReference>
<dbReference type="SMR" id="Q15WG1"/>
<dbReference type="STRING" id="342610.Patl_1251"/>
<dbReference type="KEGG" id="pat:Patl_1251"/>
<dbReference type="eggNOG" id="COG0528">
    <property type="taxonomic scope" value="Bacteria"/>
</dbReference>
<dbReference type="HOGENOM" id="CLU_033861_0_0_6"/>
<dbReference type="OrthoDB" id="9807458at2"/>
<dbReference type="UniPathway" id="UPA00159">
    <property type="reaction ID" value="UER00275"/>
</dbReference>
<dbReference type="Proteomes" id="UP000001981">
    <property type="component" value="Chromosome"/>
</dbReference>
<dbReference type="GO" id="GO:0005829">
    <property type="term" value="C:cytosol"/>
    <property type="evidence" value="ECO:0007669"/>
    <property type="project" value="TreeGrafter"/>
</dbReference>
<dbReference type="GO" id="GO:0005524">
    <property type="term" value="F:ATP binding"/>
    <property type="evidence" value="ECO:0007669"/>
    <property type="project" value="UniProtKB-KW"/>
</dbReference>
<dbReference type="GO" id="GO:0033862">
    <property type="term" value="F:UMP kinase activity"/>
    <property type="evidence" value="ECO:0007669"/>
    <property type="project" value="UniProtKB-EC"/>
</dbReference>
<dbReference type="GO" id="GO:0044210">
    <property type="term" value="P:'de novo' CTP biosynthetic process"/>
    <property type="evidence" value="ECO:0007669"/>
    <property type="project" value="UniProtKB-UniRule"/>
</dbReference>
<dbReference type="GO" id="GO:0006225">
    <property type="term" value="P:UDP biosynthetic process"/>
    <property type="evidence" value="ECO:0007669"/>
    <property type="project" value="TreeGrafter"/>
</dbReference>
<dbReference type="CDD" id="cd04254">
    <property type="entry name" value="AAK_UMPK-PyrH-Ec"/>
    <property type="match status" value="1"/>
</dbReference>
<dbReference type="FunFam" id="3.40.1160.10:FF:000001">
    <property type="entry name" value="Uridylate kinase"/>
    <property type="match status" value="1"/>
</dbReference>
<dbReference type="Gene3D" id="3.40.1160.10">
    <property type="entry name" value="Acetylglutamate kinase-like"/>
    <property type="match status" value="1"/>
</dbReference>
<dbReference type="HAMAP" id="MF_01220_B">
    <property type="entry name" value="PyrH_B"/>
    <property type="match status" value="1"/>
</dbReference>
<dbReference type="InterPro" id="IPR036393">
    <property type="entry name" value="AceGlu_kinase-like_sf"/>
</dbReference>
<dbReference type="InterPro" id="IPR001048">
    <property type="entry name" value="Asp/Glu/Uridylate_kinase"/>
</dbReference>
<dbReference type="InterPro" id="IPR011817">
    <property type="entry name" value="Uridylate_kinase"/>
</dbReference>
<dbReference type="InterPro" id="IPR015963">
    <property type="entry name" value="Uridylate_kinase_bac"/>
</dbReference>
<dbReference type="NCBIfam" id="TIGR02075">
    <property type="entry name" value="pyrH_bact"/>
    <property type="match status" value="1"/>
</dbReference>
<dbReference type="PANTHER" id="PTHR42833">
    <property type="entry name" value="URIDYLATE KINASE"/>
    <property type="match status" value="1"/>
</dbReference>
<dbReference type="PANTHER" id="PTHR42833:SF4">
    <property type="entry name" value="URIDYLATE KINASE PUMPKIN, CHLOROPLASTIC"/>
    <property type="match status" value="1"/>
</dbReference>
<dbReference type="Pfam" id="PF00696">
    <property type="entry name" value="AA_kinase"/>
    <property type="match status" value="1"/>
</dbReference>
<dbReference type="PIRSF" id="PIRSF005650">
    <property type="entry name" value="Uridylate_kin"/>
    <property type="match status" value="1"/>
</dbReference>
<dbReference type="SUPFAM" id="SSF53633">
    <property type="entry name" value="Carbamate kinase-like"/>
    <property type="match status" value="1"/>
</dbReference>
<keyword id="KW-0021">Allosteric enzyme</keyword>
<keyword id="KW-0067">ATP-binding</keyword>
<keyword id="KW-0963">Cytoplasm</keyword>
<keyword id="KW-0418">Kinase</keyword>
<keyword id="KW-0547">Nucleotide-binding</keyword>
<keyword id="KW-0665">Pyrimidine biosynthesis</keyword>
<keyword id="KW-0808">Transferase</keyword>
<name>PYRH_PSEA6</name>
<reference key="1">
    <citation type="submission" date="2006-06" db="EMBL/GenBank/DDBJ databases">
        <title>Complete sequence of Pseudoalteromonas atlantica T6c.</title>
        <authorList>
            <consortium name="US DOE Joint Genome Institute"/>
            <person name="Copeland A."/>
            <person name="Lucas S."/>
            <person name="Lapidus A."/>
            <person name="Barry K."/>
            <person name="Detter J.C."/>
            <person name="Glavina del Rio T."/>
            <person name="Hammon N."/>
            <person name="Israni S."/>
            <person name="Dalin E."/>
            <person name="Tice H."/>
            <person name="Pitluck S."/>
            <person name="Saunders E."/>
            <person name="Brettin T."/>
            <person name="Bruce D."/>
            <person name="Han C."/>
            <person name="Tapia R."/>
            <person name="Gilna P."/>
            <person name="Schmutz J."/>
            <person name="Larimer F."/>
            <person name="Land M."/>
            <person name="Hauser L."/>
            <person name="Kyrpides N."/>
            <person name="Kim E."/>
            <person name="Karls A.C."/>
            <person name="Bartlett D."/>
            <person name="Higgins B.P."/>
            <person name="Richardson P."/>
        </authorList>
    </citation>
    <scope>NUCLEOTIDE SEQUENCE [LARGE SCALE GENOMIC DNA]</scope>
    <source>
        <strain>T6c / ATCC BAA-1087</strain>
    </source>
</reference>
<feature type="chain" id="PRO_1000053979" description="Uridylate kinase">
    <location>
        <begin position="1"/>
        <end position="247"/>
    </location>
</feature>
<feature type="region of interest" description="Involved in allosteric activation by GTP" evidence="1">
    <location>
        <begin position="23"/>
        <end position="28"/>
    </location>
</feature>
<feature type="binding site" evidence="1">
    <location>
        <begin position="15"/>
        <end position="18"/>
    </location>
    <ligand>
        <name>ATP</name>
        <dbReference type="ChEBI" id="CHEBI:30616"/>
    </ligand>
</feature>
<feature type="binding site" evidence="1">
    <location>
        <position position="57"/>
    </location>
    <ligand>
        <name>UMP</name>
        <dbReference type="ChEBI" id="CHEBI:57865"/>
    </ligand>
</feature>
<feature type="binding site" evidence="1">
    <location>
        <position position="58"/>
    </location>
    <ligand>
        <name>ATP</name>
        <dbReference type="ChEBI" id="CHEBI:30616"/>
    </ligand>
</feature>
<feature type="binding site" evidence="1">
    <location>
        <position position="62"/>
    </location>
    <ligand>
        <name>ATP</name>
        <dbReference type="ChEBI" id="CHEBI:30616"/>
    </ligand>
</feature>
<feature type="binding site" evidence="1">
    <location>
        <position position="77"/>
    </location>
    <ligand>
        <name>UMP</name>
        <dbReference type="ChEBI" id="CHEBI:57865"/>
    </ligand>
</feature>
<feature type="binding site" evidence="1">
    <location>
        <begin position="138"/>
        <end position="145"/>
    </location>
    <ligand>
        <name>UMP</name>
        <dbReference type="ChEBI" id="CHEBI:57865"/>
    </ligand>
</feature>
<feature type="binding site" evidence="1">
    <location>
        <position position="165"/>
    </location>
    <ligand>
        <name>ATP</name>
        <dbReference type="ChEBI" id="CHEBI:30616"/>
    </ligand>
</feature>
<feature type="binding site" evidence="1">
    <location>
        <position position="171"/>
    </location>
    <ligand>
        <name>ATP</name>
        <dbReference type="ChEBI" id="CHEBI:30616"/>
    </ligand>
</feature>
<feature type="binding site" evidence="1">
    <location>
        <position position="174"/>
    </location>
    <ligand>
        <name>ATP</name>
        <dbReference type="ChEBI" id="CHEBI:30616"/>
    </ligand>
</feature>
<organism>
    <name type="scientific">Pseudoalteromonas atlantica (strain T6c / ATCC BAA-1087)</name>
    <dbReference type="NCBI Taxonomy" id="3042615"/>
    <lineage>
        <taxon>Bacteria</taxon>
        <taxon>Pseudomonadati</taxon>
        <taxon>Pseudomonadota</taxon>
        <taxon>Gammaproteobacteria</taxon>
        <taxon>Alteromonadales</taxon>
        <taxon>Alteromonadaceae</taxon>
        <taxon>Paraglaciecola</taxon>
    </lineage>
</organism>
<accession>Q15WG1</accession>